<dbReference type="EC" id="2.7.11.1"/>
<dbReference type="EMBL" id="CP017623">
    <property type="protein sequence ID" value="AOW26765.1"/>
    <property type="molecule type" value="Genomic_DNA"/>
</dbReference>
<dbReference type="RefSeq" id="XP_713796.1">
    <property type="nucleotide sequence ID" value="XM_708703.2"/>
</dbReference>
<dbReference type="SMR" id="Q59W62"/>
<dbReference type="BioGRID" id="1227618">
    <property type="interactions" value="15"/>
</dbReference>
<dbReference type="FunCoup" id="Q59W62">
    <property type="interactions" value="303"/>
</dbReference>
<dbReference type="STRING" id="237561.Q59W62"/>
<dbReference type="iPTMnet" id="Q59W62"/>
<dbReference type="EnsemblFungi" id="C1_11400C_A-T">
    <property type="protein sequence ID" value="C1_11400C_A-T-p1"/>
    <property type="gene ID" value="C1_11400C_A"/>
</dbReference>
<dbReference type="GeneID" id="3644543"/>
<dbReference type="KEGG" id="cal:CAALFM_C111400CA"/>
<dbReference type="CGD" id="CAL0000191817">
    <property type="gene designation" value="GIN4"/>
</dbReference>
<dbReference type="VEuPathDB" id="FungiDB:C1_11400C_A"/>
<dbReference type="eggNOG" id="KOG0588">
    <property type="taxonomic scope" value="Eukaryota"/>
</dbReference>
<dbReference type="HOGENOM" id="CLU_005306_0_0_1"/>
<dbReference type="InParanoid" id="Q59W62"/>
<dbReference type="OMA" id="DWEYMDK"/>
<dbReference type="OrthoDB" id="504170at2759"/>
<dbReference type="PRO" id="PR:Q59W62"/>
<dbReference type="Proteomes" id="UP000000559">
    <property type="component" value="Chromosome 1"/>
</dbReference>
<dbReference type="GO" id="GO:0005935">
    <property type="term" value="C:cellular bud neck"/>
    <property type="evidence" value="ECO:0000314"/>
    <property type="project" value="CGD"/>
</dbReference>
<dbReference type="GO" id="GO:0005737">
    <property type="term" value="C:cytoplasm"/>
    <property type="evidence" value="ECO:0000318"/>
    <property type="project" value="GO_Central"/>
</dbReference>
<dbReference type="GO" id="GO:0000131">
    <property type="term" value="C:incipient cellular bud site"/>
    <property type="evidence" value="ECO:0000314"/>
    <property type="project" value="CGD"/>
</dbReference>
<dbReference type="GO" id="GO:0005730">
    <property type="term" value="C:nucleolus"/>
    <property type="evidence" value="ECO:0000314"/>
    <property type="project" value="CGD"/>
</dbReference>
<dbReference type="GO" id="GO:0005634">
    <property type="term" value="C:nucleus"/>
    <property type="evidence" value="ECO:0000318"/>
    <property type="project" value="GO_Central"/>
</dbReference>
<dbReference type="GO" id="GO:0005940">
    <property type="term" value="C:septin ring"/>
    <property type="evidence" value="ECO:0000314"/>
    <property type="project" value="CGD"/>
</dbReference>
<dbReference type="GO" id="GO:0005524">
    <property type="term" value="F:ATP binding"/>
    <property type="evidence" value="ECO:0007669"/>
    <property type="project" value="UniProtKB-KW"/>
</dbReference>
<dbReference type="GO" id="GO:0005543">
    <property type="term" value="F:phospholipid binding"/>
    <property type="evidence" value="ECO:0000314"/>
    <property type="project" value="CGD"/>
</dbReference>
<dbReference type="GO" id="GO:0004672">
    <property type="term" value="F:protein kinase activity"/>
    <property type="evidence" value="ECO:0000315"/>
    <property type="project" value="CGD"/>
</dbReference>
<dbReference type="GO" id="GO:0106310">
    <property type="term" value="F:protein serine kinase activity"/>
    <property type="evidence" value="ECO:0007669"/>
    <property type="project" value="RHEA"/>
</dbReference>
<dbReference type="GO" id="GO:0004674">
    <property type="term" value="F:protein serine/threonine kinase activity"/>
    <property type="evidence" value="ECO:0000318"/>
    <property type="project" value="GO_Central"/>
</dbReference>
<dbReference type="GO" id="GO:0006915">
    <property type="term" value="P:apoptotic process"/>
    <property type="evidence" value="ECO:0007669"/>
    <property type="project" value="UniProtKB-KW"/>
</dbReference>
<dbReference type="GO" id="GO:0010458">
    <property type="term" value="P:exit from mitosis"/>
    <property type="evidence" value="ECO:0000315"/>
    <property type="project" value="CGD"/>
</dbReference>
<dbReference type="GO" id="GO:0030447">
    <property type="term" value="P:filamentous growth"/>
    <property type="evidence" value="ECO:0000315"/>
    <property type="project" value="CGD"/>
</dbReference>
<dbReference type="GO" id="GO:0044182">
    <property type="term" value="P:filamentous growth of a population of unicellular organisms"/>
    <property type="evidence" value="ECO:0000315"/>
    <property type="project" value="CGD"/>
</dbReference>
<dbReference type="GO" id="GO:0044180">
    <property type="term" value="P:filamentous growth of a unicellular organism"/>
    <property type="evidence" value="ECO:0000315"/>
    <property type="project" value="CGD"/>
</dbReference>
<dbReference type="GO" id="GO:0000086">
    <property type="term" value="P:G2/M transition of mitotic cell cycle"/>
    <property type="evidence" value="ECO:0000318"/>
    <property type="project" value="GO_Central"/>
</dbReference>
<dbReference type="GO" id="GO:0060258">
    <property type="term" value="P:negative regulation of filamentous growth"/>
    <property type="evidence" value="ECO:0000315"/>
    <property type="project" value="CGD"/>
</dbReference>
<dbReference type="GO" id="GO:0001558">
    <property type="term" value="P:regulation of cell growth"/>
    <property type="evidence" value="ECO:0000315"/>
    <property type="project" value="CGD"/>
</dbReference>
<dbReference type="GO" id="GO:0000921">
    <property type="term" value="P:septin ring assembly"/>
    <property type="evidence" value="ECO:0000315"/>
    <property type="project" value="CGD"/>
</dbReference>
<dbReference type="GO" id="GO:0044010">
    <property type="term" value="P:single-species biofilm formation"/>
    <property type="evidence" value="ECO:0000315"/>
    <property type="project" value="CGD"/>
</dbReference>
<dbReference type="CDD" id="cd12194">
    <property type="entry name" value="Kcc4p_like_C"/>
    <property type="match status" value="1"/>
</dbReference>
<dbReference type="CDD" id="cd14081">
    <property type="entry name" value="STKc_BRSK1_2"/>
    <property type="match status" value="1"/>
</dbReference>
<dbReference type="FunFam" id="3.30.200.20:FF:000003">
    <property type="entry name" value="Non-specific serine/threonine protein kinase"/>
    <property type="match status" value="1"/>
</dbReference>
<dbReference type="FunFam" id="3.30.310.220:FF:000001">
    <property type="entry name" value="Probable serine/threonine-protein kinase KCC4"/>
    <property type="match status" value="1"/>
</dbReference>
<dbReference type="FunFam" id="1.10.510.10:FF:000394">
    <property type="entry name" value="Serine/threonine-protein kinase HSL1"/>
    <property type="match status" value="1"/>
</dbReference>
<dbReference type="Gene3D" id="3.30.310.220">
    <property type="entry name" value="Fungal kinase associated-1 domain"/>
    <property type="match status" value="1"/>
</dbReference>
<dbReference type="Gene3D" id="1.10.510.10">
    <property type="entry name" value="Transferase(Phosphotransferase) domain 1"/>
    <property type="match status" value="1"/>
</dbReference>
<dbReference type="InterPro" id="IPR031850">
    <property type="entry name" value="Fungal_KA1_dom"/>
</dbReference>
<dbReference type="InterPro" id="IPR043024">
    <property type="entry name" value="KA1_sf_fungal"/>
</dbReference>
<dbReference type="InterPro" id="IPR011009">
    <property type="entry name" value="Kinase-like_dom_sf"/>
</dbReference>
<dbReference type="InterPro" id="IPR000719">
    <property type="entry name" value="Prot_kinase_dom"/>
</dbReference>
<dbReference type="InterPro" id="IPR017441">
    <property type="entry name" value="Protein_kinase_ATP_BS"/>
</dbReference>
<dbReference type="InterPro" id="IPR008271">
    <property type="entry name" value="Ser/Thr_kinase_AS"/>
</dbReference>
<dbReference type="PANTHER" id="PTHR24346">
    <property type="entry name" value="MAP/MICROTUBULE AFFINITY-REGULATING KINASE"/>
    <property type="match status" value="1"/>
</dbReference>
<dbReference type="PANTHER" id="PTHR24346:SF110">
    <property type="entry name" value="NON-SPECIFIC SERINE_THREONINE PROTEIN KINASE"/>
    <property type="match status" value="1"/>
</dbReference>
<dbReference type="Pfam" id="PF16797">
    <property type="entry name" value="Fungal_KA1"/>
    <property type="match status" value="1"/>
</dbReference>
<dbReference type="Pfam" id="PF00069">
    <property type="entry name" value="Pkinase"/>
    <property type="match status" value="1"/>
</dbReference>
<dbReference type="SMART" id="SM00220">
    <property type="entry name" value="S_TKc"/>
    <property type="match status" value="1"/>
</dbReference>
<dbReference type="SUPFAM" id="SSF56112">
    <property type="entry name" value="Protein kinase-like (PK-like)"/>
    <property type="match status" value="1"/>
</dbReference>
<dbReference type="PROSITE" id="PS00107">
    <property type="entry name" value="PROTEIN_KINASE_ATP"/>
    <property type="match status" value="1"/>
</dbReference>
<dbReference type="PROSITE" id="PS50011">
    <property type="entry name" value="PROTEIN_KINASE_DOM"/>
    <property type="match status" value="1"/>
</dbReference>
<dbReference type="PROSITE" id="PS00108">
    <property type="entry name" value="PROTEIN_KINASE_ST"/>
    <property type="match status" value="1"/>
</dbReference>
<evidence type="ECO:0000255" key="1"/>
<evidence type="ECO:0000255" key="2">
    <source>
        <dbReference type="PROSITE-ProRule" id="PRU00159"/>
    </source>
</evidence>
<evidence type="ECO:0000255" key="3">
    <source>
        <dbReference type="PROSITE-ProRule" id="PRU10027"/>
    </source>
</evidence>
<evidence type="ECO:0000256" key="4">
    <source>
        <dbReference type="SAM" id="MobiDB-lite"/>
    </source>
</evidence>
<evidence type="ECO:0000269" key="5">
    <source>
    </source>
</evidence>
<evidence type="ECO:0000269" key="6">
    <source>
    </source>
</evidence>
<evidence type="ECO:0000269" key="7">
    <source>
    </source>
</evidence>
<evidence type="ECO:0000269" key="8">
    <source>
    </source>
</evidence>
<evidence type="ECO:0000305" key="9"/>
<sequence>MPHSRQPSISSSIMSQSNHNHPQKIGPWKLGKTLGRGATGRVLLATHQTTGQKAAVKVVSKSELQDEETEKNGDGLPYGIEREIIIMKLLTHPNVLRLYDVWETSKALYLVLEYVEGGELFDLLVERGPLPEVEAIKYFRQIILGTAYCHALGICHRDLKPENLLLDSQLNVKLADFGMAALESNGKLLETSCGSPHYAAPEIVSGLKYHGAASDVWSCGVILFALLTGRLPFDDENIRNLLLKVQAGNFEMPVDEVSREARDLIARMLEVDPMRRISTEKILRHPLLTKYPMSNEDLISEKSLPHPQTGYKSLGSVRNIDKQILSNLTILWNDRPEEEIVDCLLKDGSNPEKTFYALLMRYKHNQEDNTNNNSPKKSTSFNNKVVRSGSKYSLNGTPRRKRASHISVSRPTSFQYKSNPGAGATANRNSVARHSVASSANNSPRKSPYKSPYRSPYRSPYKSPSKRYSYNQSPTKSPYGRRSNSQRQFENEPLKAKPRNIYNEIVDAQSNFSLPPSLPPSLPSKDSRYMIDEPNQPQLQQPALSQVPENPIVDESPDLMQSAKISSGKRNSIIGKNNNNSNSNKRMSKRKSIRASMTTGLKRNSITMKLLSTYAKLSGDDDWEYMDKQTKRTSATFAALCDKIFNQEDYDEEDEQLVDPEEKEAKEYERLMELERKKHEAELKARRELEKKKRRQKRRSILSSKKLSIIVKNDADPNNSEQELVDEGIKQPKRQSKNLTALRALSEGNHASEELTLEDVENLKRRSASQPVPKRRQTPVLTRRPVSRLDPLWQAHENEQLDRAKDALEQEWRDSQKRSSTVSRKKVNRESMISVMDDIVEEDQGRVNRRSTRNTYYERERDYELPEPTVEDSNLTDDYMTEIRKSRLLNSQLNVRDPLNEKRKSEPKTLISNVQIPSVTRKSRNFTTSNKRLSVLSMYSTKESYRDLNSIINSPDENPEQHQNMNKPALRTSIADRLDKAGLAEPEYETETDGEDKVSVIDLDDHLADRRTSYYDGSGKRASRASTTKRYNVHSSSGQRPKSKVPDLPKNDYDDTFVSNSDEVHKRQYKSMVSDESSASDDVFDKIKLPDGKSTKSSIDELANGTSTSGHRKPKIRHSQPGPEMLIPHLNGGIESSQPMSKVRGNNSSGHDDSVPPPPPAHKVNKKPLDDKTNFPPPEVDPKRKGSFFRKLSWGSKKTIENNTNAATNTTTQQQLPSPAESKEEKPKSSFFRWFSSSNTPSAAEIRKFNTILPKHEMSTALFALLNSWSNFGLKDLRNDQVGYYITGAISKHNSFNLKSCKFRIKINQRDFNQKSEIVCVRVKGSKVTTDTLFSEIEKVLLKEGVLDK</sequence>
<reference key="1">
    <citation type="journal article" date="2004" name="Proc. Natl. Acad. Sci. U.S.A.">
        <title>The diploid genome sequence of Candida albicans.</title>
        <authorList>
            <person name="Jones T."/>
            <person name="Federspiel N.A."/>
            <person name="Chibana H."/>
            <person name="Dungan J."/>
            <person name="Kalman S."/>
            <person name="Magee B.B."/>
            <person name="Newport G."/>
            <person name="Thorstenson Y.R."/>
            <person name="Agabian N."/>
            <person name="Magee P.T."/>
            <person name="Davis R.W."/>
            <person name="Scherer S."/>
        </authorList>
    </citation>
    <scope>NUCLEOTIDE SEQUENCE [LARGE SCALE GENOMIC DNA]</scope>
    <source>
        <strain>SC5314 / ATCC MYA-2876</strain>
    </source>
</reference>
<reference key="2">
    <citation type="journal article" date="2007" name="Genome Biol.">
        <title>Assembly of the Candida albicans genome into sixteen supercontigs aligned on the eight chromosomes.</title>
        <authorList>
            <person name="van het Hoog M."/>
            <person name="Rast T.J."/>
            <person name="Martchenko M."/>
            <person name="Grindle S."/>
            <person name="Dignard D."/>
            <person name="Hogues H."/>
            <person name="Cuomo C."/>
            <person name="Berriman M."/>
            <person name="Scherer S."/>
            <person name="Magee B.B."/>
            <person name="Whiteway M."/>
            <person name="Chibana H."/>
            <person name="Nantel A."/>
            <person name="Magee P.T."/>
        </authorList>
    </citation>
    <scope>GENOME REANNOTATION</scope>
    <source>
        <strain>SC5314 / ATCC MYA-2876</strain>
    </source>
</reference>
<reference key="3">
    <citation type="journal article" date="2013" name="Genome Biol.">
        <title>Assembly of a phased diploid Candida albicans genome facilitates allele-specific measurements and provides a simple model for repeat and indel structure.</title>
        <authorList>
            <person name="Muzzey D."/>
            <person name="Schwartz K."/>
            <person name="Weissman J.S."/>
            <person name="Sherlock G."/>
        </authorList>
    </citation>
    <scope>NUCLEOTIDE SEQUENCE [LARGE SCALE GENOMIC DNA]</scope>
    <scope>GENOME REANNOTATION</scope>
    <source>
        <strain>SC5314 / ATCC MYA-2876</strain>
    </source>
</reference>
<reference key="4">
    <citation type="journal article" date="2004" name="J. Cell Biol.">
        <title>In Candida albicans, the Nim1 kinases Gin4 and Hsl1 negatively regulate pseudohypha formation and Gin4 also controls septin organization.</title>
        <authorList>
            <person name="Wightman R."/>
            <person name="Bates S."/>
            <person name="Amornrrattanapan P."/>
            <person name="Sudbery P."/>
        </authorList>
    </citation>
    <scope>DISRUPTION PHENOTYPE</scope>
    <scope>FUNCTION</scope>
    <scope>SUBCELLULAR LOCATION</scope>
</reference>
<reference key="5">
    <citation type="journal article" date="2007" name="Dev. Cell">
        <title>Cyclin-dependent kinases control septin phosphorylation in Candida albicans hyphal development.</title>
        <authorList>
            <person name="Sinha I."/>
            <person name="Wang Y.M."/>
            <person name="Philp R."/>
            <person name="Li C.R."/>
            <person name="Yap W.H."/>
            <person name="Wang Y."/>
        </authorList>
    </citation>
    <scope>FUNCTION IN CDC11 PHOSPHORYLATION</scope>
    <scope>ASSOCIATION WITH THE SEPTIN COMPLEX</scope>
</reference>
<reference key="6">
    <citation type="journal article" date="2007" name="J. Cell Sci.">
        <title>Candida albicans hyphal morphogenesis occurs in Sec3p-independent and Sec3p-dependent phases separated by septin ring formation.</title>
        <authorList>
            <person name="Li C.R."/>
            <person name="Lee R.T."/>
            <person name="Wang Y.M."/>
            <person name="Zheng X.D."/>
            <person name="Wang Y."/>
        </authorList>
    </citation>
    <scope>FUNCTION</scope>
</reference>
<reference key="7">
    <citation type="journal article" date="2012" name="J. Cell Sci.">
        <title>CDK regulates septin organization through cell-cycle-dependent phosphorylation of the Nim1-related kinase Gin4.</title>
        <authorList>
            <person name="Li C.R."/>
            <person name="Yong J.Y."/>
            <person name="Wang Y.M."/>
            <person name="Wang Y."/>
        </authorList>
    </citation>
    <scope>PHOSPHORYLATION AT SER-10; SER-11; SER-12; SER-15; THR-69; THR-191; SER-294; SER-300; SER-303; SER-388; SER-390; SER-393; THR-397; SER-407; SER-409; THR-412; SER-413; SER-455; SER-469; SER-473; SER-477; SER-485; SER-556; SER-634; SER-720; SER-746; THR-778; THR-869; THR-876; SER-891; THR-941; SER-973; THR-990; THR-992; SER-999; THR-1056; SER-1059; SER-1074; SER-1077; SER-1078; SER-1080; SER-1094; THR-1095; SER-1097; SER-1098; THR-1106; SER-1154 AND SER-1218</scope>
    <scope>IDENTIFICATION BY MASS SPECTROMETRY</scope>
    <scope>FUNCTION</scope>
    <scope>INTERACTION WITH SEP7</scope>
</reference>
<protein>
    <recommendedName>
        <fullName>Serine/threonine-protein kinase GIN4</fullName>
        <ecNumber>2.7.11.1</ecNumber>
    </recommendedName>
    <alternativeName>
        <fullName>Growth inhibitory protein 4</fullName>
    </alternativeName>
</protein>
<accession>Q59W62</accession>
<accession>A0A1D8PF85</accession>
<proteinExistence type="evidence at protein level"/>
<comment type="function">
    <text evidence="5 6 7 8">Serine/threonine-protein kinase which regulates the localization and the function of the septins during mitosis. Involved in the formation of the septin ring but not the basal septin band. Phosphorylates septins CDC11 and SEP7. Required for the transition from pseudohyphae to hyphae. Acts upstream of IRS4 and INP51 in regulating cell wall integrity responses. Involved in propolis-induced cell death.</text>
</comment>
<comment type="catalytic activity">
    <reaction>
        <text>L-seryl-[protein] + ATP = O-phospho-L-seryl-[protein] + ADP + H(+)</text>
        <dbReference type="Rhea" id="RHEA:17989"/>
        <dbReference type="Rhea" id="RHEA-COMP:9863"/>
        <dbReference type="Rhea" id="RHEA-COMP:11604"/>
        <dbReference type="ChEBI" id="CHEBI:15378"/>
        <dbReference type="ChEBI" id="CHEBI:29999"/>
        <dbReference type="ChEBI" id="CHEBI:30616"/>
        <dbReference type="ChEBI" id="CHEBI:83421"/>
        <dbReference type="ChEBI" id="CHEBI:456216"/>
        <dbReference type="EC" id="2.7.11.1"/>
    </reaction>
</comment>
<comment type="catalytic activity">
    <reaction>
        <text>L-threonyl-[protein] + ATP = O-phospho-L-threonyl-[protein] + ADP + H(+)</text>
        <dbReference type="Rhea" id="RHEA:46608"/>
        <dbReference type="Rhea" id="RHEA-COMP:11060"/>
        <dbReference type="Rhea" id="RHEA-COMP:11605"/>
        <dbReference type="ChEBI" id="CHEBI:15378"/>
        <dbReference type="ChEBI" id="CHEBI:30013"/>
        <dbReference type="ChEBI" id="CHEBI:30616"/>
        <dbReference type="ChEBI" id="CHEBI:61977"/>
        <dbReference type="ChEBI" id="CHEBI:456216"/>
        <dbReference type="EC" id="2.7.11.1"/>
    </reaction>
</comment>
<comment type="subunit">
    <text>Associates with the septin complex which consists of CDC3, CDC10, CDC11, CDC12, and SEP7.</text>
</comment>
<comment type="subcellular location">
    <subcellularLocation>
        <location evidence="5">Cytoplasm</location>
    </subcellularLocation>
    <subcellularLocation>
        <location evidence="5">Bud neck</location>
    </subcellularLocation>
</comment>
<comment type="PTM">
    <text>Hyperphosphorylated during mitosis at dozens of sites. Among these, 7 have perfect or minimal CDK consensus sites and are CDC28 targets.</text>
</comment>
<comment type="disruption phenotype">
    <text evidence="5">Leads to hyperinvasive cells.</text>
</comment>
<comment type="similarity">
    <text evidence="9">Belongs to the protein kinase superfamily. CAMK Ser/Thr protein kinase family. NIM1 subfamily.</text>
</comment>
<gene>
    <name type="primary">GIN4</name>
    <name type="ordered locus">CAALFM_C111400CA</name>
    <name type="ORF">CaO19.663</name>
    <name type="ORF">CaO19.8280</name>
</gene>
<keyword id="KW-0053">Apoptosis</keyword>
<keyword id="KW-0067">ATP-binding</keyword>
<keyword id="KW-0175">Coiled coil</keyword>
<keyword id="KW-0963">Cytoplasm</keyword>
<keyword id="KW-0418">Kinase</keyword>
<keyword id="KW-0547">Nucleotide-binding</keyword>
<keyword id="KW-0597">Phosphoprotein</keyword>
<keyword id="KW-1185">Reference proteome</keyword>
<keyword id="KW-0723">Serine/threonine-protein kinase</keyword>
<keyword id="KW-0808">Transferase</keyword>
<name>GIN4_CANAL</name>
<organism>
    <name type="scientific">Candida albicans (strain SC5314 / ATCC MYA-2876)</name>
    <name type="common">Yeast</name>
    <dbReference type="NCBI Taxonomy" id="237561"/>
    <lineage>
        <taxon>Eukaryota</taxon>
        <taxon>Fungi</taxon>
        <taxon>Dikarya</taxon>
        <taxon>Ascomycota</taxon>
        <taxon>Saccharomycotina</taxon>
        <taxon>Pichiomycetes</taxon>
        <taxon>Debaryomycetaceae</taxon>
        <taxon>Candida/Lodderomyces clade</taxon>
        <taxon>Candida</taxon>
    </lineage>
</organism>
<feature type="chain" id="PRO_0000424368" description="Serine/threonine-protein kinase GIN4">
    <location>
        <begin position="1"/>
        <end position="1349"/>
    </location>
</feature>
<feature type="domain" description="Protein kinase" evidence="2">
    <location>
        <begin position="28"/>
        <end position="288"/>
    </location>
</feature>
<feature type="region of interest" description="Disordered" evidence="4">
    <location>
        <begin position="1"/>
        <end position="30"/>
    </location>
</feature>
<feature type="region of interest" description="Disordered" evidence="4">
    <location>
        <begin position="366"/>
        <end position="498"/>
    </location>
</feature>
<feature type="region of interest" description="Disordered" evidence="4">
    <location>
        <begin position="510"/>
        <end position="532"/>
    </location>
</feature>
<feature type="region of interest" description="Disordered" evidence="4">
    <location>
        <begin position="570"/>
        <end position="593"/>
    </location>
</feature>
<feature type="region of interest" description="Disordered" evidence="4">
    <location>
        <begin position="712"/>
        <end position="737"/>
    </location>
</feature>
<feature type="region of interest" description="Disordered" evidence="4">
    <location>
        <begin position="756"/>
        <end position="798"/>
    </location>
</feature>
<feature type="region of interest" description="Disordered" evidence="4">
    <location>
        <begin position="1011"/>
        <end position="1229"/>
    </location>
</feature>
<feature type="coiled-coil region" evidence="1">
    <location>
        <begin position="661"/>
        <end position="701"/>
    </location>
</feature>
<feature type="compositionally biased region" description="Low complexity" evidence="4">
    <location>
        <begin position="1"/>
        <end position="20"/>
    </location>
</feature>
<feature type="compositionally biased region" description="Low complexity" evidence="4">
    <location>
        <begin position="369"/>
        <end position="384"/>
    </location>
</feature>
<feature type="compositionally biased region" description="Polar residues" evidence="4">
    <location>
        <begin position="406"/>
        <end position="418"/>
    </location>
</feature>
<feature type="compositionally biased region" description="Polar residues" evidence="4">
    <location>
        <begin position="426"/>
        <end position="442"/>
    </location>
</feature>
<feature type="compositionally biased region" description="Low complexity" evidence="4">
    <location>
        <begin position="443"/>
        <end position="470"/>
    </location>
</feature>
<feature type="compositionally biased region" description="Polar residues" evidence="4">
    <location>
        <begin position="471"/>
        <end position="488"/>
    </location>
</feature>
<feature type="compositionally biased region" description="Low complexity" evidence="4">
    <location>
        <begin position="570"/>
        <end position="585"/>
    </location>
</feature>
<feature type="compositionally biased region" description="Polar residues" evidence="4">
    <location>
        <begin position="1024"/>
        <end position="1040"/>
    </location>
</feature>
<feature type="compositionally biased region" description="Basic and acidic residues" evidence="4">
    <location>
        <begin position="1044"/>
        <end position="1053"/>
    </location>
</feature>
<feature type="compositionally biased region" description="Basic and acidic residues" evidence="4">
    <location>
        <begin position="1083"/>
        <end position="1094"/>
    </location>
</feature>
<feature type="compositionally biased region" description="Polar residues" evidence="4">
    <location>
        <begin position="1134"/>
        <end position="1149"/>
    </location>
</feature>
<feature type="compositionally biased region" description="Low complexity" evidence="4">
    <location>
        <begin position="1202"/>
        <end position="1215"/>
    </location>
</feature>
<feature type="active site" description="Proton acceptor" evidence="2 3">
    <location>
        <position position="158"/>
    </location>
</feature>
<feature type="binding site" evidence="2">
    <location>
        <begin position="34"/>
        <end position="42"/>
    </location>
    <ligand>
        <name>ATP</name>
        <dbReference type="ChEBI" id="CHEBI:30616"/>
    </ligand>
</feature>
<feature type="binding site" evidence="2">
    <location>
        <position position="57"/>
    </location>
    <ligand>
        <name>ATP</name>
        <dbReference type="ChEBI" id="CHEBI:30616"/>
    </ligand>
</feature>
<feature type="modified residue" description="Phosphoserine" evidence="8">
    <location>
        <position position="10"/>
    </location>
</feature>
<feature type="modified residue" description="Phosphoserine" evidence="8">
    <location>
        <position position="11"/>
    </location>
</feature>
<feature type="modified residue" description="Phosphoserine" evidence="8">
    <location>
        <position position="12"/>
    </location>
</feature>
<feature type="modified residue" description="Phosphoserine" evidence="8">
    <location>
        <position position="15"/>
    </location>
</feature>
<feature type="modified residue" description="Phosphothreonine" evidence="8">
    <location>
        <position position="69"/>
    </location>
</feature>
<feature type="modified residue" description="Phosphothreonine" evidence="8">
    <location>
        <position position="191"/>
    </location>
</feature>
<feature type="modified residue" description="Phosphoserine" evidence="8">
    <location>
        <position position="294"/>
    </location>
</feature>
<feature type="modified residue" description="Phosphoserine" evidence="8">
    <location>
        <position position="300"/>
    </location>
</feature>
<feature type="modified residue" description="Phosphoserine" evidence="8">
    <location>
        <position position="303"/>
    </location>
</feature>
<feature type="modified residue" description="Phosphoserine" evidence="8">
    <location>
        <position position="388"/>
    </location>
</feature>
<feature type="modified residue" description="Phosphoserine" evidence="8">
    <location>
        <position position="390"/>
    </location>
</feature>
<feature type="modified residue" description="Phosphoserine" evidence="8">
    <location>
        <position position="393"/>
    </location>
</feature>
<feature type="modified residue" description="Phosphothreonine" evidence="8">
    <location>
        <position position="397"/>
    </location>
</feature>
<feature type="modified residue" description="Phosphoserine" evidence="8">
    <location>
        <position position="407"/>
    </location>
</feature>
<feature type="modified residue" description="Phosphoserine" evidence="8">
    <location>
        <position position="409"/>
    </location>
</feature>
<feature type="modified residue" description="Phosphothreonine" evidence="8">
    <location>
        <position position="412"/>
    </location>
</feature>
<feature type="modified residue" description="Phosphoserine" evidence="8">
    <location>
        <position position="413"/>
    </location>
</feature>
<feature type="modified residue" description="Phosphoserine" evidence="8">
    <location>
        <position position="455"/>
    </location>
</feature>
<feature type="modified residue" description="Phosphoserine" evidence="8">
    <location>
        <position position="469"/>
    </location>
</feature>
<feature type="modified residue" description="Phosphoserine" evidence="8">
    <location>
        <position position="473"/>
    </location>
</feature>
<feature type="modified residue" description="Phosphoserine" evidence="8">
    <location>
        <position position="477"/>
    </location>
</feature>
<feature type="modified residue" description="Phosphoserine" evidence="8">
    <location>
        <position position="485"/>
    </location>
</feature>
<feature type="modified residue" description="Phosphoserine" evidence="8">
    <location>
        <position position="556"/>
    </location>
</feature>
<feature type="modified residue" description="Phosphoserine" evidence="8">
    <location>
        <position position="634"/>
    </location>
</feature>
<feature type="modified residue" description="Phosphoserine" evidence="8">
    <location>
        <position position="720"/>
    </location>
</feature>
<feature type="modified residue" description="Phosphoserine" evidence="8">
    <location>
        <position position="746"/>
    </location>
</feature>
<feature type="modified residue" description="Phosphothreonine" evidence="8">
    <location>
        <position position="778"/>
    </location>
</feature>
<feature type="modified residue" description="Phosphothreonine" evidence="8">
    <location>
        <position position="869"/>
    </location>
</feature>
<feature type="modified residue" description="Phosphothreonine" evidence="8">
    <location>
        <position position="876"/>
    </location>
</feature>
<feature type="modified residue" description="Phosphoserine" evidence="8">
    <location>
        <position position="891"/>
    </location>
</feature>
<feature type="modified residue" description="Phosphothreonine" evidence="8">
    <location>
        <position position="941"/>
    </location>
</feature>
<feature type="modified residue" description="Phosphoserine" evidence="8">
    <location>
        <position position="973"/>
    </location>
</feature>
<feature type="modified residue" description="Phosphothreonine" evidence="8">
    <location>
        <position position="990"/>
    </location>
</feature>
<feature type="modified residue" description="Phosphothreonine" evidence="8">
    <location>
        <position position="992"/>
    </location>
</feature>
<feature type="modified residue" description="Phosphoserine" evidence="8">
    <location>
        <position position="999"/>
    </location>
</feature>
<feature type="modified residue" description="Phosphothreonine" evidence="8">
    <location>
        <position position="1056"/>
    </location>
</feature>
<feature type="modified residue" description="Phosphoserine" evidence="8">
    <location>
        <position position="1059"/>
    </location>
</feature>
<feature type="modified residue" description="Phosphoserine" evidence="8">
    <location>
        <position position="1074"/>
    </location>
</feature>
<feature type="modified residue" description="Phosphoserine" evidence="8">
    <location>
        <position position="1077"/>
    </location>
</feature>
<feature type="modified residue" description="Phosphoserine" evidence="8">
    <location>
        <position position="1078"/>
    </location>
</feature>
<feature type="modified residue" description="Phosphoserine" evidence="8">
    <location>
        <position position="1080"/>
    </location>
</feature>
<feature type="modified residue" description="Phosphoserine" evidence="8">
    <location>
        <position position="1094"/>
    </location>
</feature>
<feature type="modified residue" description="Phosphothreonine" evidence="8">
    <location>
        <position position="1095"/>
    </location>
</feature>
<feature type="modified residue" description="Phosphoserine" evidence="8">
    <location>
        <position position="1097"/>
    </location>
</feature>
<feature type="modified residue" description="Phosphoserine" evidence="8">
    <location>
        <position position="1098"/>
    </location>
</feature>
<feature type="modified residue" description="Phosphothreonine" evidence="8">
    <location>
        <position position="1106"/>
    </location>
</feature>
<feature type="modified residue" description="Phosphoserine" evidence="8">
    <location>
        <position position="1154"/>
    </location>
</feature>
<feature type="modified residue" description="Phosphoserine" evidence="8">
    <location>
        <position position="1218"/>
    </location>
</feature>